<protein>
    <recommendedName>
        <fullName evidence="1">Acetyl-coenzyme A carboxylase carboxyl transferase subunit alpha</fullName>
        <shortName evidence="1">ACCase subunit alpha</shortName>
        <shortName evidence="1">Acetyl-CoA carboxylase carboxyltransferase subunit alpha</shortName>
        <ecNumber evidence="1">2.1.3.15</ecNumber>
    </recommendedName>
</protein>
<accession>Q7NT71</accession>
<feature type="chain" id="PRO_0000223759" description="Acetyl-coenzyme A carboxylase carboxyl transferase subunit alpha">
    <location>
        <begin position="1"/>
        <end position="321"/>
    </location>
</feature>
<feature type="domain" description="CoA carboxyltransferase C-terminal" evidence="2">
    <location>
        <begin position="32"/>
        <end position="293"/>
    </location>
</feature>
<proteinExistence type="inferred from homology"/>
<reference key="1">
    <citation type="journal article" date="2003" name="Proc. Natl. Acad. Sci. U.S.A.">
        <title>The complete genome sequence of Chromobacterium violaceum reveals remarkable and exploitable bacterial adaptability.</title>
        <authorList>
            <person name="Vasconcelos A.T.R."/>
            <person name="de Almeida D.F."/>
            <person name="Hungria M."/>
            <person name="Guimaraes C.T."/>
            <person name="Antonio R.V."/>
            <person name="Almeida F.C."/>
            <person name="de Almeida L.G.P."/>
            <person name="de Almeida R."/>
            <person name="Alves-Gomes J.A."/>
            <person name="Andrade E.M."/>
            <person name="Araripe J."/>
            <person name="de Araujo M.F.F."/>
            <person name="Astolfi-Filho S."/>
            <person name="Azevedo V."/>
            <person name="Baptista A.J."/>
            <person name="Bataus L.A.M."/>
            <person name="Batista J.S."/>
            <person name="Belo A."/>
            <person name="van den Berg C."/>
            <person name="Bogo M."/>
            <person name="Bonatto S."/>
            <person name="Bordignon J."/>
            <person name="Brigido M.M."/>
            <person name="Brito C.A."/>
            <person name="Brocchi M."/>
            <person name="Burity H.A."/>
            <person name="Camargo A.A."/>
            <person name="Cardoso D.D.P."/>
            <person name="Carneiro N.P."/>
            <person name="Carraro D.M."/>
            <person name="Carvalho C.M.B."/>
            <person name="Cascardo J.C.M."/>
            <person name="Cavada B.S."/>
            <person name="Chueire L.M.O."/>
            <person name="Creczynski-Pasa T.B."/>
            <person name="Cunha-Junior N.C."/>
            <person name="Fagundes N."/>
            <person name="Falcao C.L."/>
            <person name="Fantinatti F."/>
            <person name="Farias I.P."/>
            <person name="Felipe M.S.S."/>
            <person name="Ferrari L.P."/>
            <person name="Ferro J.A."/>
            <person name="Ferro M.I.T."/>
            <person name="Franco G.R."/>
            <person name="Freitas N.S.A."/>
            <person name="Furlan L.R."/>
            <person name="Gazzinelli R.T."/>
            <person name="Gomes E.A."/>
            <person name="Goncalves P.R."/>
            <person name="Grangeiro T.B."/>
            <person name="Grattapaglia D."/>
            <person name="Grisard E.C."/>
            <person name="Hanna E.S."/>
            <person name="Jardim S.N."/>
            <person name="Laurino J."/>
            <person name="Leoi L.C.T."/>
            <person name="Lima L.F.A."/>
            <person name="Loureiro M.F."/>
            <person name="Lyra M.C.C.P."/>
            <person name="Madeira H.M.F."/>
            <person name="Manfio G.P."/>
            <person name="Maranhao A.Q."/>
            <person name="Martins W.S."/>
            <person name="di Mauro S.M.Z."/>
            <person name="de Medeiros S.R.B."/>
            <person name="Meissner R.V."/>
            <person name="Moreira M.A.M."/>
            <person name="Nascimento F.F."/>
            <person name="Nicolas M.F."/>
            <person name="Oliveira J.G."/>
            <person name="Oliveira S.C."/>
            <person name="Paixao R.F.C."/>
            <person name="Parente J.A."/>
            <person name="Pedrosa F.O."/>
            <person name="Pena S.D.J."/>
            <person name="Pereira J.O."/>
            <person name="Pereira M."/>
            <person name="Pinto L.S.R.C."/>
            <person name="Pinto L.S."/>
            <person name="Porto J.I.R."/>
            <person name="Potrich D.P."/>
            <person name="Ramalho-Neto C.E."/>
            <person name="Reis A.M.M."/>
            <person name="Rigo L.U."/>
            <person name="Rondinelli E."/>
            <person name="Santos E.B.P."/>
            <person name="Santos F.R."/>
            <person name="Schneider M.P.C."/>
            <person name="Seuanez H.N."/>
            <person name="Silva A.M.R."/>
            <person name="da Silva A.L.C."/>
            <person name="Silva D.W."/>
            <person name="Silva R."/>
            <person name="Simoes I.C."/>
            <person name="Simon D."/>
            <person name="Soares C.M.A."/>
            <person name="Soares R.B.A."/>
            <person name="Souza E.M."/>
            <person name="Souza K.R.L."/>
            <person name="Souza R.C."/>
            <person name="Steffens M.B.R."/>
            <person name="Steindel M."/>
            <person name="Teixeira S.R."/>
            <person name="Urmenyi T."/>
            <person name="Vettore A."/>
            <person name="Wassem R."/>
            <person name="Zaha A."/>
            <person name="Simpson A.J.G."/>
        </authorList>
    </citation>
    <scope>NUCLEOTIDE SEQUENCE [LARGE SCALE GENOMIC DNA]</scope>
    <source>
        <strain>ATCC 12472 / DSM 30191 / JCM 1249 / CCUG 213 / NBRC 12614 / NCIMB 9131 / NCTC 9757 / MK</strain>
    </source>
</reference>
<dbReference type="EC" id="2.1.3.15" evidence="1"/>
<dbReference type="EMBL" id="AE016825">
    <property type="protein sequence ID" value="AAQ60856.1"/>
    <property type="molecule type" value="Genomic_DNA"/>
</dbReference>
<dbReference type="RefSeq" id="WP_011136737.1">
    <property type="nucleotide sequence ID" value="NC_005085.1"/>
</dbReference>
<dbReference type="SMR" id="Q7NT71"/>
<dbReference type="STRING" id="243365.CV_3190"/>
<dbReference type="GeneID" id="66368913"/>
<dbReference type="KEGG" id="cvi:CV_3190"/>
<dbReference type="eggNOG" id="COG0825">
    <property type="taxonomic scope" value="Bacteria"/>
</dbReference>
<dbReference type="HOGENOM" id="CLU_015486_0_2_4"/>
<dbReference type="OrthoDB" id="9808023at2"/>
<dbReference type="UniPathway" id="UPA00655">
    <property type="reaction ID" value="UER00711"/>
</dbReference>
<dbReference type="Proteomes" id="UP000001424">
    <property type="component" value="Chromosome"/>
</dbReference>
<dbReference type="GO" id="GO:0009317">
    <property type="term" value="C:acetyl-CoA carboxylase complex"/>
    <property type="evidence" value="ECO:0007669"/>
    <property type="project" value="InterPro"/>
</dbReference>
<dbReference type="GO" id="GO:0003989">
    <property type="term" value="F:acetyl-CoA carboxylase activity"/>
    <property type="evidence" value="ECO:0007669"/>
    <property type="project" value="InterPro"/>
</dbReference>
<dbReference type="GO" id="GO:0005524">
    <property type="term" value="F:ATP binding"/>
    <property type="evidence" value="ECO:0007669"/>
    <property type="project" value="UniProtKB-KW"/>
</dbReference>
<dbReference type="GO" id="GO:0016743">
    <property type="term" value="F:carboxyl- or carbamoyltransferase activity"/>
    <property type="evidence" value="ECO:0007669"/>
    <property type="project" value="UniProtKB-UniRule"/>
</dbReference>
<dbReference type="GO" id="GO:0006633">
    <property type="term" value="P:fatty acid biosynthetic process"/>
    <property type="evidence" value="ECO:0007669"/>
    <property type="project" value="UniProtKB-KW"/>
</dbReference>
<dbReference type="GO" id="GO:2001295">
    <property type="term" value="P:malonyl-CoA biosynthetic process"/>
    <property type="evidence" value="ECO:0007669"/>
    <property type="project" value="UniProtKB-UniRule"/>
</dbReference>
<dbReference type="Gene3D" id="3.90.226.10">
    <property type="entry name" value="2-enoyl-CoA Hydratase, Chain A, domain 1"/>
    <property type="match status" value="1"/>
</dbReference>
<dbReference type="HAMAP" id="MF_00823">
    <property type="entry name" value="AcetylCoA_CT_alpha"/>
    <property type="match status" value="1"/>
</dbReference>
<dbReference type="InterPro" id="IPR001095">
    <property type="entry name" value="Acetyl_CoA_COase_a_su"/>
</dbReference>
<dbReference type="InterPro" id="IPR029045">
    <property type="entry name" value="ClpP/crotonase-like_dom_sf"/>
</dbReference>
<dbReference type="InterPro" id="IPR011763">
    <property type="entry name" value="COA_CT_C"/>
</dbReference>
<dbReference type="NCBIfam" id="TIGR00513">
    <property type="entry name" value="accA"/>
    <property type="match status" value="1"/>
</dbReference>
<dbReference type="NCBIfam" id="NF041504">
    <property type="entry name" value="AccA_sub"/>
    <property type="match status" value="1"/>
</dbReference>
<dbReference type="NCBIfam" id="NF004344">
    <property type="entry name" value="PRK05724.1"/>
    <property type="match status" value="1"/>
</dbReference>
<dbReference type="PANTHER" id="PTHR42853">
    <property type="entry name" value="ACETYL-COENZYME A CARBOXYLASE CARBOXYL TRANSFERASE SUBUNIT ALPHA"/>
    <property type="match status" value="1"/>
</dbReference>
<dbReference type="PANTHER" id="PTHR42853:SF3">
    <property type="entry name" value="ACETYL-COENZYME A CARBOXYLASE CARBOXYL TRANSFERASE SUBUNIT ALPHA, CHLOROPLASTIC"/>
    <property type="match status" value="1"/>
</dbReference>
<dbReference type="Pfam" id="PF03255">
    <property type="entry name" value="ACCA"/>
    <property type="match status" value="1"/>
</dbReference>
<dbReference type="PRINTS" id="PR01069">
    <property type="entry name" value="ACCCTRFRASEA"/>
</dbReference>
<dbReference type="SUPFAM" id="SSF52096">
    <property type="entry name" value="ClpP/crotonase"/>
    <property type="match status" value="1"/>
</dbReference>
<dbReference type="PROSITE" id="PS50989">
    <property type="entry name" value="COA_CT_CTER"/>
    <property type="match status" value="1"/>
</dbReference>
<comment type="function">
    <text evidence="1">Component of the acetyl coenzyme A carboxylase (ACC) complex. First, biotin carboxylase catalyzes the carboxylation of biotin on its carrier protein (BCCP) and then the CO(2) group is transferred by the carboxyltransferase to acetyl-CoA to form malonyl-CoA.</text>
</comment>
<comment type="catalytic activity">
    <reaction evidence="1">
        <text>N(6)-carboxybiotinyl-L-lysyl-[protein] + acetyl-CoA = N(6)-biotinyl-L-lysyl-[protein] + malonyl-CoA</text>
        <dbReference type="Rhea" id="RHEA:54728"/>
        <dbReference type="Rhea" id="RHEA-COMP:10505"/>
        <dbReference type="Rhea" id="RHEA-COMP:10506"/>
        <dbReference type="ChEBI" id="CHEBI:57288"/>
        <dbReference type="ChEBI" id="CHEBI:57384"/>
        <dbReference type="ChEBI" id="CHEBI:83144"/>
        <dbReference type="ChEBI" id="CHEBI:83145"/>
        <dbReference type="EC" id="2.1.3.15"/>
    </reaction>
</comment>
<comment type="pathway">
    <text evidence="1">Lipid metabolism; malonyl-CoA biosynthesis; malonyl-CoA from acetyl-CoA: step 1/1.</text>
</comment>
<comment type="subunit">
    <text evidence="1">Acetyl-CoA carboxylase is a heterohexamer composed of biotin carboxyl carrier protein (AccB), biotin carboxylase (AccC) and two subunits each of ACCase subunit alpha (AccA) and ACCase subunit beta (AccD).</text>
</comment>
<comment type="subcellular location">
    <subcellularLocation>
        <location evidence="1">Cytoplasm</location>
    </subcellularLocation>
</comment>
<comment type="similarity">
    <text evidence="1">Belongs to the AccA family.</text>
</comment>
<sequence>MKPTFLDFEQPIAELENKIEELRFVQDDSVLDISEEIARLQKKSLELTKTLYAKLTPSQIAMVARHPQRPYTLDYIQAIFTDFEELHGDRAFADDAAIVGGLARFNGQSVMVIGHQKGRDTKEKIRRNFGMPHPEGYRKALRLMKLAEKFGIPVLTFVDTTGAWPGIGAEERGQSEAIGRNLYEMTNLRVPIVVTVIGEGGSGGALAIAVGDHVNMLQYATYSVISPEGCASILWKTAERASDAAEALGITAPRLKTLGLIDRVVTEPVGGAHRDHAQMMTTLKRVLQDQLKEVQSKPMDALLKERFDRLMSYGRFKEDAA</sequence>
<gene>
    <name evidence="1" type="primary">accA</name>
    <name type="ordered locus">CV_3190</name>
</gene>
<evidence type="ECO:0000255" key="1">
    <source>
        <dbReference type="HAMAP-Rule" id="MF_00823"/>
    </source>
</evidence>
<evidence type="ECO:0000255" key="2">
    <source>
        <dbReference type="PROSITE-ProRule" id="PRU01137"/>
    </source>
</evidence>
<keyword id="KW-0067">ATP-binding</keyword>
<keyword id="KW-0963">Cytoplasm</keyword>
<keyword id="KW-0275">Fatty acid biosynthesis</keyword>
<keyword id="KW-0276">Fatty acid metabolism</keyword>
<keyword id="KW-0444">Lipid biosynthesis</keyword>
<keyword id="KW-0443">Lipid metabolism</keyword>
<keyword id="KW-0547">Nucleotide-binding</keyword>
<keyword id="KW-1185">Reference proteome</keyword>
<keyword id="KW-0808">Transferase</keyword>
<name>ACCA_CHRVO</name>
<organism>
    <name type="scientific">Chromobacterium violaceum (strain ATCC 12472 / DSM 30191 / JCM 1249 / CCUG 213 / NBRC 12614 / NCIMB 9131 / NCTC 9757 / MK)</name>
    <dbReference type="NCBI Taxonomy" id="243365"/>
    <lineage>
        <taxon>Bacteria</taxon>
        <taxon>Pseudomonadati</taxon>
        <taxon>Pseudomonadota</taxon>
        <taxon>Betaproteobacteria</taxon>
        <taxon>Neisseriales</taxon>
        <taxon>Chromobacteriaceae</taxon>
        <taxon>Chromobacterium</taxon>
    </lineage>
</organism>